<protein>
    <recommendedName>
        <fullName>Transcription initiation factor TFIID subunit 4</fullName>
    </recommendedName>
    <alternativeName>
        <fullName>TBP-associated factor 4</fullName>
        <shortName>AtTAF4</shortName>
    </alternativeName>
</protein>
<evidence type="ECO:0000250" key="1"/>
<evidence type="ECO:0000255" key="2">
    <source>
        <dbReference type="PROSITE-ProRule" id="PRU01227"/>
    </source>
</evidence>
<evidence type="ECO:0000256" key="3">
    <source>
        <dbReference type="SAM" id="MobiDB-lite"/>
    </source>
</evidence>
<evidence type="ECO:0000269" key="4">
    <source>
    </source>
</evidence>
<evidence type="ECO:0000269" key="5">
    <source>
    </source>
</evidence>
<evidence type="ECO:0000305" key="6"/>
<dbReference type="EMBL" id="AY457043">
    <property type="protein sequence ID" value="AAR21619.1"/>
    <property type="molecule type" value="mRNA"/>
</dbReference>
<dbReference type="EMBL" id="AC012375">
    <property type="protein sequence ID" value="AAF24960.1"/>
    <property type="status" value="ALT_SEQ"/>
    <property type="molecule type" value="Genomic_DNA"/>
</dbReference>
<dbReference type="EMBL" id="CP002684">
    <property type="protein sequence ID" value="AEE30869.1"/>
    <property type="molecule type" value="Genomic_DNA"/>
</dbReference>
<dbReference type="PIR" id="A86402">
    <property type="entry name" value="A86402"/>
</dbReference>
<dbReference type="RefSeq" id="NP_174093.3">
    <property type="nucleotide sequence ID" value="NM_102537.3"/>
</dbReference>
<dbReference type="SMR" id="Q6SJR1"/>
<dbReference type="BioGRID" id="24900">
    <property type="interactions" value="9"/>
</dbReference>
<dbReference type="FunCoup" id="Q6SJR1">
    <property type="interactions" value="38"/>
</dbReference>
<dbReference type="IntAct" id="Q6SJR1">
    <property type="interactions" value="9"/>
</dbReference>
<dbReference type="STRING" id="3702.Q6SJR1"/>
<dbReference type="GlyGen" id="Q6SJR1">
    <property type="glycosylation" value="1 site"/>
</dbReference>
<dbReference type="iPTMnet" id="Q6SJR1"/>
<dbReference type="PaxDb" id="3702-AT1G27720.1"/>
<dbReference type="ProteomicsDB" id="233009"/>
<dbReference type="EnsemblPlants" id="AT1G27720.1">
    <property type="protein sequence ID" value="AT1G27720.1"/>
    <property type="gene ID" value="AT1G27720"/>
</dbReference>
<dbReference type="GeneID" id="839665"/>
<dbReference type="Gramene" id="AT1G27720.1">
    <property type="protein sequence ID" value="AT1G27720.1"/>
    <property type="gene ID" value="AT1G27720"/>
</dbReference>
<dbReference type="KEGG" id="ath:AT1G27720"/>
<dbReference type="Araport" id="AT1G27720"/>
<dbReference type="TAIR" id="AT1G27720">
    <property type="gene designation" value="TAF4B"/>
</dbReference>
<dbReference type="eggNOG" id="KOG2341">
    <property type="taxonomic scope" value="Eukaryota"/>
</dbReference>
<dbReference type="HOGENOM" id="CLU_011622_1_0_1"/>
<dbReference type="InParanoid" id="Q6SJR1"/>
<dbReference type="OMA" id="PINPAPC"/>
<dbReference type="PhylomeDB" id="Q6SJR1"/>
<dbReference type="PRO" id="PR:Q6SJR1"/>
<dbReference type="Proteomes" id="UP000006548">
    <property type="component" value="Chromosome 1"/>
</dbReference>
<dbReference type="ExpressionAtlas" id="Q6SJR1">
    <property type="expression patterns" value="baseline and differential"/>
</dbReference>
<dbReference type="GO" id="GO:0009506">
    <property type="term" value="C:plasmodesma"/>
    <property type="evidence" value="ECO:0007005"/>
    <property type="project" value="TAIR"/>
</dbReference>
<dbReference type="GO" id="GO:0005669">
    <property type="term" value="C:transcription factor TFIID complex"/>
    <property type="evidence" value="ECO:0007669"/>
    <property type="project" value="InterPro"/>
</dbReference>
<dbReference type="GO" id="GO:0046982">
    <property type="term" value="F:protein heterodimerization activity"/>
    <property type="evidence" value="ECO:0007669"/>
    <property type="project" value="InterPro"/>
</dbReference>
<dbReference type="GO" id="GO:0006352">
    <property type="term" value="P:DNA-templated transcription initiation"/>
    <property type="evidence" value="ECO:0007669"/>
    <property type="project" value="InterPro"/>
</dbReference>
<dbReference type="GO" id="GO:0006366">
    <property type="term" value="P:transcription by RNA polymerase II"/>
    <property type="evidence" value="ECO:0007669"/>
    <property type="project" value="UniProtKB-ARBA"/>
</dbReference>
<dbReference type="CDD" id="cd08045">
    <property type="entry name" value="HFD_TAF4"/>
    <property type="match status" value="1"/>
</dbReference>
<dbReference type="FunFam" id="1.10.20.10:FF:000015">
    <property type="entry name" value="Transcription initiation factor TFIID subunit 4B"/>
    <property type="match status" value="1"/>
</dbReference>
<dbReference type="Gene3D" id="1.10.20.10">
    <property type="entry name" value="Histone, subunit A"/>
    <property type="match status" value="1"/>
</dbReference>
<dbReference type="InterPro" id="IPR009072">
    <property type="entry name" value="Histone-fold"/>
</dbReference>
<dbReference type="InterPro" id="IPR022003">
    <property type="entry name" value="RST"/>
</dbReference>
<dbReference type="InterPro" id="IPR045144">
    <property type="entry name" value="TAF4"/>
</dbReference>
<dbReference type="InterPro" id="IPR007900">
    <property type="entry name" value="TAF4_C"/>
</dbReference>
<dbReference type="PANTHER" id="PTHR15138">
    <property type="entry name" value="TRANSCRIPTION INITIATION FACTOR TFIID SUBUNIT 4"/>
    <property type="match status" value="1"/>
</dbReference>
<dbReference type="PANTHER" id="PTHR15138:SF25">
    <property type="entry name" value="TRANSCRIPTION INITIATION FACTOR TFIID SUBUNIT 4"/>
    <property type="match status" value="1"/>
</dbReference>
<dbReference type="Pfam" id="PF12174">
    <property type="entry name" value="RST"/>
    <property type="match status" value="1"/>
</dbReference>
<dbReference type="Pfam" id="PF05236">
    <property type="entry name" value="TAF4"/>
    <property type="match status" value="1"/>
</dbReference>
<dbReference type="PROSITE" id="PS51879">
    <property type="entry name" value="RST"/>
    <property type="match status" value="1"/>
</dbReference>
<keyword id="KW-0010">Activator</keyword>
<keyword id="KW-0539">Nucleus</keyword>
<keyword id="KW-1185">Reference proteome</keyword>
<keyword id="KW-0804">Transcription</keyword>
<keyword id="KW-0805">Transcription regulation</keyword>
<proteinExistence type="evidence at protein level"/>
<gene>
    <name type="primary">TAF4</name>
    <name type="ordered locus">At1g27720</name>
    <name type="ORF">T22C5.17</name>
</gene>
<comment type="function">
    <text evidence="1">TAFs are components of the transcription factor IID (TFIID) complex that is essential for mediating regulation of RNA polymerase transcription.</text>
</comment>
<comment type="subunit">
    <text evidence="5">Component of the TFIID complex. TFIID is composed of TATA binding protein (TBP) and a number of TBP-associated factors (TAFs) whose MWs range from 14-217 kDa. Interacts with TAF5, TAF10, TAF12, TAF12B, TAF15 and TAF15B.</text>
</comment>
<comment type="subcellular location">
    <subcellularLocation>
        <location evidence="6">Nucleus</location>
    </subcellularLocation>
</comment>
<comment type="tissue specificity">
    <text evidence="4">Expressed in roots, leaves and inflorescences.</text>
</comment>
<comment type="similarity">
    <text evidence="6">Belongs to the TAF4 family.</text>
</comment>
<comment type="sequence caution" evidence="6">
    <conflict type="erroneous gene model prediction">
        <sequence resource="EMBL-CDS" id="AAF24960"/>
    </conflict>
</comment>
<name>TAF4_ARATH</name>
<organism>
    <name type="scientific">Arabidopsis thaliana</name>
    <name type="common">Mouse-ear cress</name>
    <dbReference type="NCBI Taxonomy" id="3702"/>
    <lineage>
        <taxon>Eukaryota</taxon>
        <taxon>Viridiplantae</taxon>
        <taxon>Streptophyta</taxon>
        <taxon>Embryophyta</taxon>
        <taxon>Tracheophyta</taxon>
        <taxon>Spermatophyta</taxon>
        <taxon>Magnoliopsida</taxon>
        <taxon>eudicotyledons</taxon>
        <taxon>Gunneridae</taxon>
        <taxon>Pentapetalae</taxon>
        <taxon>rosids</taxon>
        <taxon>malvids</taxon>
        <taxon>Brassicales</taxon>
        <taxon>Brassicaceae</taxon>
        <taxon>Camelineae</taxon>
        <taxon>Arabidopsis</taxon>
    </lineage>
</organism>
<feature type="chain" id="PRO_0000424040" description="Transcription initiation factor TFIID subunit 4">
    <location>
        <begin position="1"/>
        <end position="720"/>
    </location>
</feature>
<feature type="domain" description="RST" evidence="2">
    <location>
        <begin position="79"/>
        <end position="149"/>
    </location>
</feature>
<feature type="region of interest" description="Disordered" evidence="3">
    <location>
        <begin position="149"/>
        <end position="203"/>
    </location>
</feature>
<feature type="region of interest" description="Disordered" evidence="3">
    <location>
        <begin position="427"/>
        <end position="456"/>
    </location>
</feature>
<feature type="region of interest" description="Disordered" evidence="3">
    <location>
        <begin position="589"/>
        <end position="628"/>
    </location>
</feature>
<feature type="region of interest" description="Disordered" evidence="3">
    <location>
        <begin position="654"/>
        <end position="678"/>
    </location>
</feature>
<feature type="compositionally biased region" description="Low complexity" evidence="3">
    <location>
        <begin position="186"/>
        <end position="198"/>
    </location>
</feature>
<reference key="1">
    <citation type="journal article" date="2004" name="Gene">
        <title>TBP-associated factors in Arabidopsis.</title>
        <authorList>
            <person name="Lago C."/>
            <person name="Clerici E."/>
            <person name="Mizzi L."/>
            <person name="Colombo L."/>
            <person name="Kater M.M."/>
        </authorList>
    </citation>
    <scope>NUCLEOTIDE SEQUENCE [MRNA]</scope>
    <scope>IDENTIFICATION</scope>
    <scope>NOMENCLATURE</scope>
    <scope>TISSUE SPECIFICITY</scope>
</reference>
<reference key="2">
    <citation type="journal article" date="2007" name="Plant Mol. Biol.">
        <title>Yeast two-hybrid map of Arabidopsis TFIID.</title>
        <authorList>
            <person name="Lawit S.J."/>
            <person name="O'Grady K."/>
            <person name="Gurley W.B."/>
            <person name="Czarnecka-Verner E."/>
        </authorList>
    </citation>
    <scope>NUCLEOTIDE SEQUENCE [MRNA]</scope>
    <scope>INTERACTION WITH TAF5; TAF10; TAF12; TAF12B; TAF15 AND TAF15B</scope>
</reference>
<reference key="3">
    <citation type="journal article" date="2000" name="Nature">
        <title>Sequence and analysis of chromosome 1 of the plant Arabidopsis thaliana.</title>
        <authorList>
            <person name="Theologis A."/>
            <person name="Ecker J.R."/>
            <person name="Palm C.J."/>
            <person name="Federspiel N.A."/>
            <person name="Kaul S."/>
            <person name="White O."/>
            <person name="Alonso J."/>
            <person name="Altafi H."/>
            <person name="Araujo R."/>
            <person name="Bowman C.L."/>
            <person name="Brooks S.Y."/>
            <person name="Buehler E."/>
            <person name="Chan A."/>
            <person name="Chao Q."/>
            <person name="Chen H."/>
            <person name="Cheuk R.F."/>
            <person name="Chin C.W."/>
            <person name="Chung M.K."/>
            <person name="Conn L."/>
            <person name="Conway A.B."/>
            <person name="Conway A.R."/>
            <person name="Creasy T.H."/>
            <person name="Dewar K."/>
            <person name="Dunn P."/>
            <person name="Etgu P."/>
            <person name="Feldblyum T.V."/>
            <person name="Feng J.-D."/>
            <person name="Fong B."/>
            <person name="Fujii C.Y."/>
            <person name="Gill J.E."/>
            <person name="Goldsmith A.D."/>
            <person name="Haas B."/>
            <person name="Hansen N.F."/>
            <person name="Hughes B."/>
            <person name="Huizar L."/>
            <person name="Hunter J.L."/>
            <person name="Jenkins J."/>
            <person name="Johnson-Hopson C."/>
            <person name="Khan S."/>
            <person name="Khaykin E."/>
            <person name="Kim C.J."/>
            <person name="Koo H.L."/>
            <person name="Kremenetskaia I."/>
            <person name="Kurtz D.B."/>
            <person name="Kwan A."/>
            <person name="Lam B."/>
            <person name="Langin-Hooper S."/>
            <person name="Lee A."/>
            <person name="Lee J.M."/>
            <person name="Lenz C.A."/>
            <person name="Li J.H."/>
            <person name="Li Y.-P."/>
            <person name="Lin X."/>
            <person name="Liu S.X."/>
            <person name="Liu Z.A."/>
            <person name="Luros J.S."/>
            <person name="Maiti R."/>
            <person name="Marziali A."/>
            <person name="Militscher J."/>
            <person name="Miranda M."/>
            <person name="Nguyen M."/>
            <person name="Nierman W.C."/>
            <person name="Osborne B.I."/>
            <person name="Pai G."/>
            <person name="Peterson J."/>
            <person name="Pham P.K."/>
            <person name="Rizzo M."/>
            <person name="Rooney T."/>
            <person name="Rowley D."/>
            <person name="Sakano H."/>
            <person name="Salzberg S.L."/>
            <person name="Schwartz J.R."/>
            <person name="Shinn P."/>
            <person name="Southwick A.M."/>
            <person name="Sun H."/>
            <person name="Tallon L.J."/>
            <person name="Tambunga G."/>
            <person name="Toriumi M.J."/>
            <person name="Town C.D."/>
            <person name="Utterback T."/>
            <person name="Van Aken S."/>
            <person name="Vaysberg M."/>
            <person name="Vysotskaia V.S."/>
            <person name="Walker M."/>
            <person name="Wu D."/>
            <person name="Yu G."/>
            <person name="Fraser C.M."/>
            <person name="Venter J.C."/>
            <person name="Davis R.W."/>
        </authorList>
    </citation>
    <scope>NUCLEOTIDE SEQUENCE [LARGE SCALE GENOMIC DNA]</scope>
    <source>
        <strain>cv. Columbia</strain>
    </source>
</reference>
<reference key="4">
    <citation type="journal article" date="2017" name="Plant J.">
        <title>Araport11: a complete reannotation of the Arabidopsis thaliana reference genome.</title>
        <authorList>
            <person name="Cheng C.Y."/>
            <person name="Krishnakumar V."/>
            <person name="Chan A.P."/>
            <person name="Thibaud-Nissen F."/>
            <person name="Schobel S."/>
            <person name="Town C.D."/>
        </authorList>
    </citation>
    <scope>GENOME REANNOTATION</scope>
    <source>
        <strain>cv. Columbia</strain>
    </source>
</reference>
<sequence>MDLSIVKLLEEDEEVDSKHSEDDLQMFQDSLIRDIEGSNLKSINNTTGNESEKPQPRYMKLQKMSSKETPWVEKTVDPVNHNLRLARVTDLLRTVVDHQPGKKTHCLNLHYKLKRKELTMEEFMRQLRDLVGDQIIRSVISQLPQLKPGNMGIKVPGRSNHDKVSKSAEFTAQESDPREVHVNQLSSTTSGTLNSSTTVQGLNKHPEQHMQLPSSSFHMDTKSGSLNPYPGTNVTSPGSSSRAKLPDFQHRENNQNVGIASVGGPTKSTINMTTVPKFERPTFVNGPSRVQDGPISDFPKNSSFPLYSAPWQGSVTKDHTVGPSSSVIHVEHKLIDQSFEQAHKPRYLVQQGVTNVPLKQKNAIPISSNDDLEKQSSKMGLFTSTTSASSVFPSMTTQLDSSTMVNMPAPSETIPKIANVTVTPKMPSVGQKKPLEALGSSLPPSRKKQKICGTSSDESIEKFNDVTAVSGINLREEEKQLLDSGPKKNDRVSKAYRRLVHGEEERTLLQKIPLQRKLTEIMGKSGLKHIDHDVERCLSLCVEERMRGLLFNIIRISKQRTDAEKCRNRTFITSDIRKEINEMNQKVKEEWEKKHSGEEKNKENDTEKEDQRSNEVKANKKDEDKERAKAANVAVRAAVGGDDRFSKWKLMAEARQRSSPGPGRNSKKLSGGTQFGKNQGLPKVVRSISVKDVIAVVEKEPQMSRSTLLYRVYNRICSDV</sequence>
<accession>Q6SJR1</accession>
<accession>Q9SFY7</accession>